<gene>
    <name evidence="1" type="primary">ybeY</name>
    <name type="ordered locus">Anae109_2711</name>
</gene>
<organism>
    <name type="scientific">Anaeromyxobacter sp. (strain Fw109-5)</name>
    <dbReference type="NCBI Taxonomy" id="404589"/>
    <lineage>
        <taxon>Bacteria</taxon>
        <taxon>Pseudomonadati</taxon>
        <taxon>Myxococcota</taxon>
        <taxon>Myxococcia</taxon>
        <taxon>Myxococcales</taxon>
        <taxon>Cystobacterineae</taxon>
        <taxon>Anaeromyxobacteraceae</taxon>
        <taxon>Anaeromyxobacter</taxon>
    </lineage>
</organism>
<keyword id="KW-0963">Cytoplasm</keyword>
<keyword id="KW-0255">Endonuclease</keyword>
<keyword id="KW-0378">Hydrolase</keyword>
<keyword id="KW-0479">Metal-binding</keyword>
<keyword id="KW-0540">Nuclease</keyword>
<keyword id="KW-1185">Reference proteome</keyword>
<keyword id="KW-0690">Ribosome biogenesis</keyword>
<keyword id="KW-0698">rRNA processing</keyword>
<keyword id="KW-0862">Zinc</keyword>
<proteinExistence type="inferred from homology"/>
<feature type="chain" id="PRO_1000000710" description="Endoribonuclease YbeY">
    <location>
        <begin position="1"/>
        <end position="192"/>
    </location>
</feature>
<feature type="region of interest" description="Disordered" evidence="2">
    <location>
        <begin position="142"/>
        <end position="192"/>
    </location>
</feature>
<feature type="compositionally biased region" description="Low complexity" evidence="2">
    <location>
        <begin position="159"/>
        <end position="180"/>
    </location>
</feature>
<feature type="binding site" evidence="1">
    <location>
        <position position="109"/>
    </location>
    <ligand>
        <name>Zn(2+)</name>
        <dbReference type="ChEBI" id="CHEBI:29105"/>
        <note>catalytic</note>
    </ligand>
</feature>
<feature type="binding site" evidence="1">
    <location>
        <position position="113"/>
    </location>
    <ligand>
        <name>Zn(2+)</name>
        <dbReference type="ChEBI" id="CHEBI:29105"/>
        <note>catalytic</note>
    </ligand>
</feature>
<feature type="binding site" evidence="1">
    <location>
        <position position="119"/>
    </location>
    <ligand>
        <name>Zn(2+)</name>
        <dbReference type="ChEBI" id="CHEBI:29105"/>
        <note>catalytic</note>
    </ligand>
</feature>
<evidence type="ECO:0000255" key="1">
    <source>
        <dbReference type="HAMAP-Rule" id="MF_00009"/>
    </source>
</evidence>
<evidence type="ECO:0000256" key="2">
    <source>
        <dbReference type="SAM" id="MobiDB-lite"/>
    </source>
</evidence>
<dbReference type="EC" id="3.1.-.-" evidence="1"/>
<dbReference type="EMBL" id="CP000769">
    <property type="protein sequence ID" value="ABS26912.1"/>
    <property type="molecule type" value="Genomic_DNA"/>
</dbReference>
<dbReference type="RefSeq" id="WP_012097513.1">
    <property type="nucleotide sequence ID" value="NC_009675.1"/>
</dbReference>
<dbReference type="SMR" id="A7HDW6"/>
<dbReference type="STRING" id="404589.Anae109_2711"/>
<dbReference type="KEGG" id="afw:Anae109_2711"/>
<dbReference type="eggNOG" id="COG0319">
    <property type="taxonomic scope" value="Bacteria"/>
</dbReference>
<dbReference type="HOGENOM" id="CLU_1412589_0_0_7"/>
<dbReference type="OrthoDB" id="9807740at2"/>
<dbReference type="Proteomes" id="UP000006382">
    <property type="component" value="Chromosome"/>
</dbReference>
<dbReference type="GO" id="GO:0005737">
    <property type="term" value="C:cytoplasm"/>
    <property type="evidence" value="ECO:0007669"/>
    <property type="project" value="UniProtKB-SubCell"/>
</dbReference>
<dbReference type="GO" id="GO:0004222">
    <property type="term" value="F:metalloendopeptidase activity"/>
    <property type="evidence" value="ECO:0007669"/>
    <property type="project" value="InterPro"/>
</dbReference>
<dbReference type="GO" id="GO:0004521">
    <property type="term" value="F:RNA endonuclease activity"/>
    <property type="evidence" value="ECO:0007669"/>
    <property type="project" value="UniProtKB-UniRule"/>
</dbReference>
<dbReference type="GO" id="GO:0008270">
    <property type="term" value="F:zinc ion binding"/>
    <property type="evidence" value="ECO:0007669"/>
    <property type="project" value="UniProtKB-UniRule"/>
</dbReference>
<dbReference type="GO" id="GO:0006364">
    <property type="term" value="P:rRNA processing"/>
    <property type="evidence" value="ECO:0007669"/>
    <property type="project" value="UniProtKB-UniRule"/>
</dbReference>
<dbReference type="Gene3D" id="3.40.390.30">
    <property type="entry name" value="Metalloproteases ('zincins'), catalytic domain"/>
    <property type="match status" value="1"/>
</dbReference>
<dbReference type="HAMAP" id="MF_00009">
    <property type="entry name" value="Endoribonucl_YbeY"/>
    <property type="match status" value="1"/>
</dbReference>
<dbReference type="InterPro" id="IPR023091">
    <property type="entry name" value="MetalPrtase_cat_dom_sf_prd"/>
</dbReference>
<dbReference type="InterPro" id="IPR002036">
    <property type="entry name" value="YbeY"/>
</dbReference>
<dbReference type="InterPro" id="IPR020549">
    <property type="entry name" value="YbeY_CS"/>
</dbReference>
<dbReference type="NCBIfam" id="TIGR00043">
    <property type="entry name" value="rRNA maturation RNase YbeY"/>
    <property type="match status" value="1"/>
</dbReference>
<dbReference type="PANTHER" id="PTHR46986">
    <property type="entry name" value="ENDORIBONUCLEASE YBEY, CHLOROPLASTIC"/>
    <property type="match status" value="1"/>
</dbReference>
<dbReference type="PANTHER" id="PTHR46986:SF1">
    <property type="entry name" value="ENDORIBONUCLEASE YBEY, CHLOROPLASTIC"/>
    <property type="match status" value="1"/>
</dbReference>
<dbReference type="Pfam" id="PF02130">
    <property type="entry name" value="YbeY"/>
    <property type="match status" value="1"/>
</dbReference>
<dbReference type="SUPFAM" id="SSF55486">
    <property type="entry name" value="Metalloproteases ('zincins'), catalytic domain"/>
    <property type="match status" value="1"/>
</dbReference>
<dbReference type="PROSITE" id="PS01306">
    <property type="entry name" value="UPF0054"/>
    <property type="match status" value="1"/>
</dbReference>
<name>YBEY_ANADF</name>
<protein>
    <recommendedName>
        <fullName evidence="1">Endoribonuclease YbeY</fullName>
        <ecNumber evidence="1">3.1.-.-</ecNumber>
    </recommendedName>
</protein>
<comment type="function">
    <text evidence="1">Single strand-specific metallo-endoribonuclease involved in late-stage 70S ribosome quality control and in maturation of the 3' terminus of the 16S rRNA.</text>
</comment>
<comment type="cofactor">
    <cofactor evidence="1">
        <name>Zn(2+)</name>
        <dbReference type="ChEBI" id="CHEBI:29105"/>
    </cofactor>
    <text evidence="1">Binds 1 zinc ion.</text>
</comment>
<comment type="subcellular location">
    <subcellularLocation>
        <location evidence="1">Cytoplasm</location>
    </subcellularLocation>
</comment>
<comment type="similarity">
    <text evidence="1">Belongs to the endoribonuclease YbeY family.</text>
</comment>
<sequence>MTVRLSSEHPRGRSAARRLRTRAAAYLAALGRADAEISILLVGDRRIRALNREWRGKDAATDVLSFPLSEPPGSGPLLGDVVISLDTAARRARQERRAVGAELDRYLAHGLLHLLGYDHERPADARRMARKEAELARAEGLVGAALREGGPARAAETETSWTRSPTSTSTRSPSGSTARGTRARSSRAGSGR</sequence>
<reference key="1">
    <citation type="journal article" date="2015" name="Genome Announc.">
        <title>Complete genome sequence of Anaeromyxobacter sp. Fw109-5, an anaerobic, metal-reducing bacterium isolated from a contaminated subsurface environment.</title>
        <authorList>
            <person name="Hwang C."/>
            <person name="Copeland A."/>
            <person name="Lucas S."/>
            <person name="Lapidus A."/>
            <person name="Barry K."/>
            <person name="Glavina Del Rio T."/>
            <person name="Dalin E."/>
            <person name="Tice H."/>
            <person name="Pitluck S."/>
            <person name="Sims D."/>
            <person name="Brettin T."/>
            <person name="Bruce D.C."/>
            <person name="Detter J.C."/>
            <person name="Han C.S."/>
            <person name="Schmutz J."/>
            <person name="Larimer F.W."/>
            <person name="Land M.L."/>
            <person name="Hauser L.J."/>
            <person name="Kyrpides N."/>
            <person name="Lykidis A."/>
            <person name="Richardson P."/>
            <person name="Belieav A."/>
            <person name="Sanford R.A."/>
            <person name="Loeffler F.E."/>
            <person name="Fields M.W."/>
        </authorList>
    </citation>
    <scope>NUCLEOTIDE SEQUENCE [LARGE SCALE GENOMIC DNA]</scope>
    <source>
        <strain>Fw109-5</strain>
    </source>
</reference>
<accession>A7HDW6</accession>